<protein>
    <recommendedName>
        <fullName evidence="1">Xanthine permease XanQ</fullName>
    </recommendedName>
</protein>
<gene>
    <name type="primary">xanQ</name>
    <name type="ordered locus">Z4221</name>
    <name type="ordered locus">ECs3755</name>
</gene>
<organism>
    <name type="scientific">Escherichia coli O157:H7</name>
    <dbReference type="NCBI Taxonomy" id="83334"/>
    <lineage>
        <taxon>Bacteria</taxon>
        <taxon>Pseudomonadati</taxon>
        <taxon>Pseudomonadota</taxon>
        <taxon>Gammaproteobacteria</taxon>
        <taxon>Enterobacterales</taxon>
        <taxon>Enterobacteriaceae</taxon>
        <taxon>Escherichia</taxon>
    </lineage>
</organism>
<accession>P67446</accession>
<accession>Q46815</accession>
<comment type="function">
    <text evidence="1">Specific, proton motive force-dependent high-affinity transporter for xanthine.</text>
</comment>
<comment type="catalytic activity">
    <reaction evidence="1">
        <text>xanthine(in) + H(+)(in) = xanthine(out) + H(+)(out)</text>
        <dbReference type="Rhea" id="RHEA:29663"/>
        <dbReference type="ChEBI" id="CHEBI:15378"/>
        <dbReference type="ChEBI" id="CHEBI:17712"/>
    </reaction>
</comment>
<comment type="subcellular location">
    <subcellularLocation>
        <location evidence="1">Cell inner membrane</location>
        <topology evidence="2">Multi-pass membrane protein</topology>
    </subcellularLocation>
</comment>
<comment type="similarity">
    <text evidence="3">Belongs to the nucleobase:cation symporter-2 (NCS2) (TC 2.A.40) family.</text>
</comment>
<comment type="sequence caution" evidence="3">
    <conflict type="erroneous initiation">
        <sequence resource="EMBL-CDS" id="AAG58011"/>
    </conflict>
    <text>Extended N-terminus.</text>
</comment>
<reference key="1">
    <citation type="journal article" date="2001" name="Nature">
        <title>Genome sequence of enterohaemorrhagic Escherichia coli O157:H7.</title>
        <authorList>
            <person name="Perna N.T."/>
            <person name="Plunkett G. III"/>
            <person name="Burland V."/>
            <person name="Mau B."/>
            <person name="Glasner J.D."/>
            <person name="Rose D.J."/>
            <person name="Mayhew G.F."/>
            <person name="Evans P.S."/>
            <person name="Gregor J."/>
            <person name="Kirkpatrick H.A."/>
            <person name="Posfai G."/>
            <person name="Hackett J."/>
            <person name="Klink S."/>
            <person name="Boutin A."/>
            <person name="Shao Y."/>
            <person name="Miller L."/>
            <person name="Grotbeck E.J."/>
            <person name="Davis N.W."/>
            <person name="Lim A."/>
            <person name="Dimalanta E.T."/>
            <person name="Potamousis K."/>
            <person name="Apodaca J."/>
            <person name="Anantharaman T.S."/>
            <person name="Lin J."/>
            <person name="Yen G."/>
            <person name="Schwartz D.C."/>
            <person name="Welch R.A."/>
            <person name="Blattner F.R."/>
        </authorList>
    </citation>
    <scope>NUCLEOTIDE SEQUENCE [LARGE SCALE GENOMIC DNA]</scope>
    <source>
        <strain>O157:H7 / EDL933 / ATCC 700927 / EHEC</strain>
    </source>
</reference>
<reference key="2">
    <citation type="journal article" date="2001" name="DNA Res.">
        <title>Complete genome sequence of enterohemorrhagic Escherichia coli O157:H7 and genomic comparison with a laboratory strain K-12.</title>
        <authorList>
            <person name="Hayashi T."/>
            <person name="Makino K."/>
            <person name="Ohnishi M."/>
            <person name="Kurokawa K."/>
            <person name="Ishii K."/>
            <person name="Yokoyama K."/>
            <person name="Han C.-G."/>
            <person name="Ohtsubo E."/>
            <person name="Nakayama K."/>
            <person name="Murata T."/>
            <person name="Tanaka M."/>
            <person name="Tobe T."/>
            <person name="Iida T."/>
            <person name="Takami H."/>
            <person name="Honda T."/>
            <person name="Sasakawa C."/>
            <person name="Ogasawara N."/>
            <person name="Yasunaga T."/>
            <person name="Kuhara S."/>
            <person name="Shiba T."/>
            <person name="Hattori M."/>
            <person name="Shinagawa H."/>
        </authorList>
    </citation>
    <scope>NUCLEOTIDE SEQUENCE [LARGE SCALE GENOMIC DNA]</scope>
    <source>
        <strain>O157:H7 / Sakai / RIMD 0509952 / EHEC</strain>
    </source>
</reference>
<name>XANQ_ECO57</name>
<dbReference type="EMBL" id="AE005174">
    <property type="protein sequence ID" value="AAG58011.1"/>
    <property type="status" value="ALT_INIT"/>
    <property type="molecule type" value="Genomic_DNA"/>
</dbReference>
<dbReference type="EMBL" id="BA000007">
    <property type="protein sequence ID" value="BAB37178.2"/>
    <property type="molecule type" value="Genomic_DNA"/>
</dbReference>
<dbReference type="PIR" id="C91098">
    <property type="entry name" value="C91098"/>
</dbReference>
<dbReference type="PIR" id="G85943">
    <property type="entry name" value="G85943"/>
</dbReference>
<dbReference type="RefSeq" id="NP_311782.1">
    <property type="nucleotide sequence ID" value="NC_002695.1"/>
</dbReference>
<dbReference type="RefSeq" id="WP_001280192.1">
    <property type="nucleotide sequence ID" value="NZ_VOAI01000003.1"/>
</dbReference>
<dbReference type="SMR" id="P67446"/>
<dbReference type="STRING" id="155864.Z4221"/>
<dbReference type="GeneID" id="75205281"/>
<dbReference type="GeneID" id="916416"/>
<dbReference type="KEGG" id="ece:Z4221"/>
<dbReference type="KEGG" id="ecs:ECs_3755"/>
<dbReference type="PATRIC" id="fig|386585.9.peg.3917"/>
<dbReference type="eggNOG" id="COG2233">
    <property type="taxonomic scope" value="Bacteria"/>
</dbReference>
<dbReference type="HOGENOM" id="CLU_017959_8_0_6"/>
<dbReference type="OMA" id="HVAVMIV"/>
<dbReference type="Proteomes" id="UP000000558">
    <property type="component" value="Chromosome"/>
</dbReference>
<dbReference type="Proteomes" id="UP000002519">
    <property type="component" value="Chromosome"/>
</dbReference>
<dbReference type="GO" id="GO:0005886">
    <property type="term" value="C:plasma membrane"/>
    <property type="evidence" value="ECO:0007669"/>
    <property type="project" value="UniProtKB-SubCell"/>
</dbReference>
<dbReference type="GO" id="GO:0042907">
    <property type="term" value="F:xanthine transmembrane transporter activity"/>
    <property type="evidence" value="ECO:0007669"/>
    <property type="project" value="TreeGrafter"/>
</dbReference>
<dbReference type="InterPro" id="IPR006043">
    <property type="entry name" value="NCS2"/>
</dbReference>
<dbReference type="InterPro" id="IPR006042">
    <property type="entry name" value="Xan_ur_permease"/>
</dbReference>
<dbReference type="NCBIfam" id="TIGR00801">
    <property type="entry name" value="ncs2"/>
    <property type="match status" value="1"/>
</dbReference>
<dbReference type="PANTHER" id="PTHR42810">
    <property type="entry name" value="PURINE PERMEASE C1399.01C-RELATED"/>
    <property type="match status" value="1"/>
</dbReference>
<dbReference type="PANTHER" id="PTHR42810:SF5">
    <property type="entry name" value="XANTHINE PERMEASE XANQ"/>
    <property type="match status" value="1"/>
</dbReference>
<dbReference type="Pfam" id="PF00860">
    <property type="entry name" value="Xan_ur_permease"/>
    <property type="match status" value="1"/>
</dbReference>
<dbReference type="PROSITE" id="PS01116">
    <property type="entry name" value="XANTH_URACIL_PERMASE"/>
    <property type="match status" value="1"/>
</dbReference>
<proteinExistence type="inferred from homology"/>
<evidence type="ECO:0000250" key="1">
    <source>
        <dbReference type="UniProtKB" id="P67444"/>
    </source>
</evidence>
<evidence type="ECO:0000255" key="2"/>
<evidence type="ECO:0000305" key="3"/>
<feature type="chain" id="PRO_0000165967" description="Xanthine permease XanQ">
    <location>
        <begin position="1"/>
        <end position="466"/>
    </location>
</feature>
<feature type="topological domain" description="Cytoplasmic" evidence="2">
    <location>
        <begin position="1"/>
        <end position="44"/>
    </location>
</feature>
<feature type="transmembrane region" description="Helical" evidence="2">
    <location>
        <begin position="45"/>
        <end position="65"/>
    </location>
</feature>
<feature type="topological domain" description="Periplasmic" evidence="2">
    <location>
        <begin position="66"/>
        <end position="74"/>
    </location>
</feature>
<feature type="transmembrane region" description="Helical" evidence="2">
    <location>
        <begin position="75"/>
        <end position="95"/>
    </location>
</feature>
<feature type="topological domain" description="Cytoplasmic" evidence="2">
    <location>
        <begin position="96"/>
        <end position="99"/>
    </location>
</feature>
<feature type="transmembrane region" description="Helical" evidence="2">
    <location>
        <begin position="100"/>
        <end position="120"/>
    </location>
</feature>
<feature type="topological domain" description="Periplasmic" evidence="2">
    <location>
        <begin position="121"/>
        <end position="139"/>
    </location>
</feature>
<feature type="transmembrane region" description="Helical" evidence="2">
    <location>
        <begin position="140"/>
        <end position="160"/>
    </location>
</feature>
<feature type="topological domain" description="Cytoplasmic" evidence="2">
    <location>
        <begin position="161"/>
        <end position="170"/>
    </location>
</feature>
<feature type="transmembrane region" description="Helical" evidence="2">
    <location>
        <begin position="171"/>
        <end position="191"/>
    </location>
</feature>
<feature type="topological domain" description="Periplasmic" evidence="2">
    <location>
        <begin position="192"/>
        <end position="199"/>
    </location>
</feature>
<feature type="transmembrane region" description="Helical" evidence="2">
    <location>
        <begin position="200"/>
        <end position="220"/>
    </location>
</feature>
<feature type="topological domain" description="Cytoplasmic" evidence="2">
    <location>
        <begin position="221"/>
        <end position="229"/>
    </location>
</feature>
<feature type="transmembrane region" description="Helical" evidence="2">
    <location>
        <begin position="230"/>
        <end position="250"/>
    </location>
</feature>
<feature type="topological domain" description="Periplasmic" evidence="2">
    <location>
        <begin position="251"/>
        <end position="277"/>
    </location>
</feature>
<feature type="transmembrane region" description="Helical" evidence="2">
    <location>
        <begin position="278"/>
        <end position="298"/>
    </location>
</feature>
<feature type="topological domain" description="Cytoplasmic" evidence="2">
    <location>
        <begin position="299"/>
        <end position="317"/>
    </location>
</feature>
<feature type="transmembrane region" description="Helical" evidence="2">
    <location>
        <begin position="318"/>
        <end position="338"/>
    </location>
</feature>
<feature type="topological domain" description="Periplasmic" evidence="2">
    <location>
        <begin position="339"/>
        <end position="361"/>
    </location>
</feature>
<feature type="transmembrane region" description="Helical" evidence="2">
    <location>
        <begin position="362"/>
        <end position="382"/>
    </location>
</feature>
<feature type="topological domain" description="Cytoplasmic" evidence="2">
    <location>
        <position position="383"/>
    </location>
</feature>
<feature type="transmembrane region" description="Helical" evidence="2">
    <location>
        <begin position="384"/>
        <end position="403"/>
    </location>
</feature>
<feature type="topological domain" description="Periplasmic" evidence="2">
    <location>
        <begin position="404"/>
        <end position="444"/>
    </location>
</feature>
<feature type="transmembrane region" description="Helical" evidence="2">
    <location>
        <begin position="445"/>
        <end position="465"/>
    </location>
</feature>
<feature type="topological domain" description="Cytoplasmic" evidence="1">
    <location>
        <position position="466"/>
    </location>
</feature>
<keyword id="KW-0997">Cell inner membrane</keyword>
<keyword id="KW-1003">Cell membrane</keyword>
<keyword id="KW-0472">Membrane</keyword>
<keyword id="KW-1185">Reference proteome</keyword>
<keyword id="KW-0812">Transmembrane</keyword>
<keyword id="KW-1133">Transmembrane helix</keyword>
<keyword id="KW-0813">Transport</keyword>
<sequence>MSDINHAGSDLIFELEDRPPFHQALVGAITHLLAIFVPMVTPALIVGAALQLSAETTAYLVSMAMIASGIGTWLQVNRYGIVGSGLLSIQSVNFSFVTVMIALGSSMKSDGFHEELIMSSLLGVSFVGAFLVVGSSFILPYLRRVITPTVSGIVVLMIGLSLIKVGIIDFGGGFAAKSSGTFGNYEHLGVGLLVLIVVIGFNCCRSPLLRMGGIAIGLCVGYIASLCLGMVDFSSMRNLPLITIPHPFKYGFSFSFHQFLVVGTIYLLSVLEAVGDITATAMVSRRPIQGEEYQSRLKGGVLADGLVSVIASAVGSLPLTTFAQNNGVIQMTGVASRYVGRTIAVMLVILGLFPMIGGFFTTIPSAVLGGAMTLMFSMIAIAGIRIIITNGLKRRETLIVATSLGLGLGVSYDPEIFKILPASIYVLVENPICAGGLTAILLNIILPGGYRQENVLPGITSAEEMD</sequence>